<organism>
    <name type="scientific">Mus musculus</name>
    <name type="common">Mouse</name>
    <dbReference type="NCBI Taxonomy" id="10090"/>
    <lineage>
        <taxon>Eukaryota</taxon>
        <taxon>Metazoa</taxon>
        <taxon>Chordata</taxon>
        <taxon>Craniata</taxon>
        <taxon>Vertebrata</taxon>
        <taxon>Euteleostomi</taxon>
        <taxon>Mammalia</taxon>
        <taxon>Eutheria</taxon>
        <taxon>Euarchontoglires</taxon>
        <taxon>Glires</taxon>
        <taxon>Rodentia</taxon>
        <taxon>Myomorpha</taxon>
        <taxon>Muroidea</taxon>
        <taxon>Muridae</taxon>
        <taxon>Murinae</taxon>
        <taxon>Mus</taxon>
        <taxon>Mus</taxon>
    </lineage>
</organism>
<accession>Q9D992</accession>
<accession>E9Q4N4</accession>
<gene>
    <name evidence="4" type="primary">Majin</name>
</gene>
<proteinExistence type="evidence at protein level"/>
<sequence>MSLKPFTYPFPETRFLHAGPNVYKFKIRYGNSIRGEEIEDKEVIVQELEDSIRAVLANMDSLQPFVTEHFIVFPYKSKWERVSHLKFKHGESILTPYPFVFTLYIEMKWFAEDLPSGKPADDIPLELVLAETEAEEATMRKWKRKLMEEPSSPSRQGPHRAKMETSSEASSNKKPLKESKRSTDEEAQQEYQDTPASNAIAVKEQDAALGHGLQGLVVPPLQHSSPPPPKEPGARGFLGFLSALFPFRYFFKKSGQ</sequence>
<keyword id="KW-0025">Alternative splicing</keyword>
<keyword id="KW-0158">Chromosome</keyword>
<keyword id="KW-0238">DNA-binding</keyword>
<keyword id="KW-0469">Meiosis</keyword>
<keyword id="KW-0472">Membrane</keyword>
<keyword id="KW-0539">Nucleus</keyword>
<keyword id="KW-1185">Reference proteome</keyword>
<keyword id="KW-0779">Telomere</keyword>
<keyword id="KW-0812">Transmembrane</keyword>
<keyword id="KW-1133">Transmembrane helix</keyword>
<comment type="function">
    <text evidence="3">Meiosis-specific telomere-associated protein involved in meiotic telomere attachment to the nucleus inner membrane, a crucial step for homologous pairing and synapsis. Component of the MAJIN-TERB1-TERB2 complex, which promotes telomere cap exchange by mediating attachment of telomeric DNA to the inner nuclear membrane and replacement of the protective cap of telomeric chromosomes: in early meiosis, the MAJIN-TERB1-TERB2 complex associates with telomeric DNA and the shelterin/telosome complex. During prophase, the complex matures and promotes release of the shelterin/telosome complex from telomeric DNA. In the complex, MAJIN acts as the anchoring subunit to the nucleus inner membrane. MAJIN shows DNA-binding activity, possibly for the stabilization of telomere attachment on the nucleus inner membrane.</text>
</comment>
<comment type="subunit">
    <text evidence="3">Component of the MAJIN-TERB1-TERB2 complex, composed of MAJIN, TERB1 and TERB2.</text>
</comment>
<comment type="subcellular location">
    <subcellularLocation>
        <location evidence="3">Nucleus inner membrane</location>
        <topology evidence="6">Single-pass membrane protein</topology>
    </subcellularLocation>
    <subcellularLocation>
        <location evidence="3">Chromosome</location>
        <location evidence="3">Telomere</location>
    </subcellularLocation>
    <text evidence="3">Localizes to telomeres throughout meiotic prophase I and disappears in metaphase I. In leptotene spermatocytes, localizes to telomeres that localize to the nucleus inner membrane.</text>
</comment>
<comment type="alternative products">
    <event type="alternative splicing"/>
    <isoform>
        <id>Q9D992-1</id>
        <name>1</name>
        <sequence type="displayed"/>
    </isoform>
    <isoform>
        <id>Q9D992-2</id>
        <name>2</name>
        <sequence type="described" ref="VSP_058064"/>
    </isoform>
</comment>
<comment type="tissue specificity">
    <text evidence="3">Specifically expressed in germline tissues.</text>
</comment>
<comment type="disruption phenotype">
    <text evidence="3">Mice develop normally, exhibit no overt phenotype, but are infertile (both males and females). Gonads are characterized by the absence of post-meiotic cells. Impaired localization of Terb1 and Terb2 to the nucleus inner membrane.</text>
</comment>
<comment type="miscellaneous">
    <text evidence="4">MAJIN was named after the 'genie in Aladdin's lamp' in Japanese.</text>
</comment>
<comment type="similarity">
    <text evidence="5">Belongs to the MAJIN family.</text>
</comment>
<evidence type="ECO:0000255" key="1"/>
<evidence type="ECO:0000256" key="2">
    <source>
        <dbReference type="SAM" id="MobiDB-lite"/>
    </source>
</evidence>
<evidence type="ECO:0000269" key="3">
    <source>
    </source>
</evidence>
<evidence type="ECO:0000303" key="4">
    <source>
    </source>
</evidence>
<evidence type="ECO:0000305" key="5"/>
<evidence type="ECO:0000305" key="6">
    <source>
    </source>
</evidence>
<dbReference type="EMBL" id="AK007250">
    <property type="protein sequence ID" value="BAB24915.1"/>
    <property type="molecule type" value="mRNA"/>
</dbReference>
<dbReference type="EMBL" id="AC127556">
    <property type="status" value="NOT_ANNOTATED_CDS"/>
    <property type="molecule type" value="Genomic_DNA"/>
</dbReference>
<dbReference type="CCDS" id="CCDS50364.1">
    <molecule id="Q9D992-1"/>
</dbReference>
<dbReference type="RefSeq" id="NP_001159391.1">
    <molecule id="Q9D992-1"/>
    <property type="nucleotide sequence ID" value="NM_001165919.2"/>
</dbReference>
<dbReference type="RefSeq" id="NP_001364004.1">
    <molecule id="Q9D992-2"/>
    <property type="nucleotide sequence ID" value="NM_001377075.1"/>
</dbReference>
<dbReference type="RefSeq" id="XP_006531883.1">
    <property type="nucleotide sequence ID" value="XM_006531820.2"/>
</dbReference>
<dbReference type="SMR" id="Q9D992"/>
<dbReference type="CORUM" id="Q9D992"/>
<dbReference type="FunCoup" id="Q9D992">
    <property type="interactions" value="32"/>
</dbReference>
<dbReference type="STRING" id="10090.ENSMUSP00000109156"/>
<dbReference type="iPTMnet" id="Q9D992"/>
<dbReference type="PhosphoSitePlus" id="Q9D992"/>
<dbReference type="PaxDb" id="10090-ENSMUSP00000109156"/>
<dbReference type="ProteomicsDB" id="292004">
    <molecule id="Q9D992-1"/>
</dbReference>
<dbReference type="ProteomicsDB" id="292005">
    <molecule id="Q9D992-2"/>
</dbReference>
<dbReference type="Antibodypedia" id="52613">
    <property type="antibodies" value="41 antibodies from 13 providers"/>
</dbReference>
<dbReference type="Ensembl" id="ENSMUST00000025699.9">
    <molecule id="Q9D992-2"/>
    <property type="protein sequence ID" value="ENSMUSP00000025699.3"/>
    <property type="gene ID" value="ENSMUSG00000024786.10"/>
</dbReference>
<dbReference type="Ensembl" id="ENSMUST00000113528.2">
    <molecule id="Q9D992-1"/>
    <property type="protein sequence ID" value="ENSMUSP00000109156.2"/>
    <property type="gene ID" value="ENSMUSG00000024786.10"/>
</dbReference>
<dbReference type="GeneID" id="622554"/>
<dbReference type="KEGG" id="mmu:622554"/>
<dbReference type="UCSC" id="uc008ghr.2">
    <molecule id="Q9D992-1"/>
    <property type="organism name" value="mouse"/>
</dbReference>
<dbReference type="UCSC" id="uc012bhj.1">
    <property type="organism name" value="mouse"/>
</dbReference>
<dbReference type="AGR" id="MGI:1923913"/>
<dbReference type="CTD" id="283129"/>
<dbReference type="MGI" id="MGI:1923913">
    <property type="gene designation" value="Majin"/>
</dbReference>
<dbReference type="VEuPathDB" id="HostDB:ENSMUSG00000024786"/>
<dbReference type="eggNOG" id="ENOG502S50S">
    <property type="taxonomic scope" value="Eukaryota"/>
</dbReference>
<dbReference type="GeneTree" id="ENSGT00390000007971"/>
<dbReference type="HOGENOM" id="CLU_094252_1_1_1"/>
<dbReference type="InParanoid" id="Q9D992"/>
<dbReference type="OMA" id="HLKFKHE"/>
<dbReference type="OrthoDB" id="6162963at2759"/>
<dbReference type="TreeFam" id="TF336863"/>
<dbReference type="BioGRID-ORCS" id="622554">
    <property type="hits" value="1 hit in 75 CRISPR screens"/>
</dbReference>
<dbReference type="ChiTaRS" id="Majin">
    <property type="organism name" value="mouse"/>
</dbReference>
<dbReference type="PRO" id="PR:Q9D992"/>
<dbReference type="Proteomes" id="UP000000589">
    <property type="component" value="Chromosome 19"/>
</dbReference>
<dbReference type="RNAct" id="Q9D992">
    <property type="molecule type" value="protein"/>
</dbReference>
<dbReference type="Bgee" id="ENSMUSG00000024786">
    <property type="expression patterns" value="Expressed in spermatocyte and 21 other cell types or tissues"/>
</dbReference>
<dbReference type="GO" id="GO:0000781">
    <property type="term" value="C:chromosome, telomeric region"/>
    <property type="evidence" value="ECO:0000314"/>
    <property type="project" value="UniProtKB"/>
</dbReference>
<dbReference type="GO" id="GO:0005635">
    <property type="term" value="C:nuclear envelope"/>
    <property type="evidence" value="ECO:0000314"/>
    <property type="project" value="MGI"/>
</dbReference>
<dbReference type="GO" id="GO:0005637">
    <property type="term" value="C:nuclear inner membrane"/>
    <property type="evidence" value="ECO:0000314"/>
    <property type="project" value="UniProtKB"/>
</dbReference>
<dbReference type="GO" id="GO:0031965">
    <property type="term" value="C:nuclear membrane"/>
    <property type="evidence" value="ECO:0000266"/>
    <property type="project" value="MGI"/>
</dbReference>
<dbReference type="GO" id="GO:0003677">
    <property type="term" value="F:DNA binding"/>
    <property type="evidence" value="ECO:0007669"/>
    <property type="project" value="UniProtKB-KW"/>
</dbReference>
<dbReference type="GO" id="GO:1990918">
    <property type="term" value="P:double-strand break repair involved in meiotic recombination"/>
    <property type="evidence" value="ECO:0000316"/>
    <property type="project" value="MGI"/>
</dbReference>
<dbReference type="GO" id="GO:0007129">
    <property type="term" value="P:homologous chromosome pairing at meiosis"/>
    <property type="evidence" value="ECO:0000315"/>
    <property type="project" value="UniProtKB"/>
</dbReference>
<dbReference type="GO" id="GO:0070197">
    <property type="term" value="P:meiotic attachment of telomere to nuclear envelope"/>
    <property type="evidence" value="ECO:0000315"/>
    <property type="project" value="UniProtKB"/>
</dbReference>
<dbReference type="GO" id="GO:0045141">
    <property type="term" value="P:meiotic telomere clustering"/>
    <property type="evidence" value="ECO:0000315"/>
    <property type="project" value="UniProtKB"/>
</dbReference>
<dbReference type="GO" id="GO:0048477">
    <property type="term" value="P:oogenesis"/>
    <property type="evidence" value="ECO:0000315"/>
    <property type="project" value="MGI"/>
</dbReference>
<dbReference type="GO" id="GO:0007283">
    <property type="term" value="P:spermatogenesis"/>
    <property type="evidence" value="ECO:0000315"/>
    <property type="project" value="MGI"/>
</dbReference>
<dbReference type="InterPro" id="IPR027816">
    <property type="entry name" value="MAJIN"/>
</dbReference>
<dbReference type="PANTHER" id="PTHR35824:SF1">
    <property type="entry name" value="MEMBRANE-ANCHORED JUNCTION PROTEIN"/>
    <property type="match status" value="1"/>
</dbReference>
<dbReference type="PANTHER" id="PTHR35824">
    <property type="entry name" value="MEMBRANE-ANCHORED JUNCTION PROTEIN MAJIN"/>
    <property type="match status" value="1"/>
</dbReference>
<dbReference type="Pfam" id="PF15077">
    <property type="entry name" value="MAJIN"/>
    <property type="match status" value="1"/>
</dbReference>
<reference key="1">
    <citation type="journal article" date="2005" name="Science">
        <title>The transcriptional landscape of the mammalian genome.</title>
        <authorList>
            <person name="Carninci P."/>
            <person name="Kasukawa T."/>
            <person name="Katayama S."/>
            <person name="Gough J."/>
            <person name="Frith M.C."/>
            <person name="Maeda N."/>
            <person name="Oyama R."/>
            <person name="Ravasi T."/>
            <person name="Lenhard B."/>
            <person name="Wells C."/>
            <person name="Kodzius R."/>
            <person name="Shimokawa K."/>
            <person name="Bajic V.B."/>
            <person name="Brenner S.E."/>
            <person name="Batalov S."/>
            <person name="Forrest A.R."/>
            <person name="Zavolan M."/>
            <person name="Davis M.J."/>
            <person name="Wilming L.G."/>
            <person name="Aidinis V."/>
            <person name="Allen J.E."/>
            <person name="Ambesi-Impiombato A."/>
            <person name="Apweiler R."/>
            <person name="Aturaliya R.N."/>
            <person name="Bailey T.L."/>
            <person name="Bansal M."/>
            <person name="Baxter L."/>
            <person name="Beisel K.W."/>
            <person name="Bersano T."/>
            <person name="Bono H."/>
            <person name="Chalk A.M."/>
            <person name="Chiu K.P."/>
            <person name="Choudhary V."/>
            <person name="Christoffels A."/>
            <person name="Clutterbuck D.R."/>
            <person name="Crowe M.L."/>
            <person name="Dalla E."/>
            <person name="Dalrymple B.P."/>
            <person name="de Bono B."/>
            <person name="Della Gatta G."/>
            <person name="di Bernardo D."/>
            <person name="Down T."/>
            <person name="Engstrom P."/>
            <person name="Fagiolini M."/>
            <person name="Faulkner G."/>
            <person name="Fletcher C.F."/>
            <person name="Fukushima T."/>
            <person name="Furuno M."/>
            <person name="Futaki S."/>
            <person name="Gariboldi M."/>
            <person name="Georgii-Hemming P."/>
            <person name="Gingeras T.R."/>
            <person name="Gojobori T."/>
            <person name="Green R.E."/>
            <person name="Gustincich S."/>
            <person name="Harbers M."/>
            <person name="Hayashi Y."/>
            <person name="Hensch T.K."/>
            <person name="Hirokawa N."/>
            <person name="Hill D."/>
            <person name="Huminiecki L."/>
            <person name="Iacono M."/>
            <person name="Ikeo K."/>
            <person name="Iwama A."/>
            <person name="Ishikawa T."/>
            <person name="Jakt M."/>
            <person name="Kanapin A."/>
            <person name="Katoh M."/>
            <person name="Kawasawa Y."/>
            <person name="Kelso J."/>
            <person name="Kitamura H."/>
            <person name="Kitano H."/>
            <person name="Kollias G."/>
            <person name="Krishnan S.P."/>
            <person name="Kruger A."/>
            <person name="Kummerfeld S.K."/>
            <person name="Kurochkin I.V."/>
            <person name="Lareau L.F."/>
            <person name="Lazarevic D."/>
            <person name="Lipovich L."/>
            <person name="Liu J."/>
            <person name="Liuni S."/>
            <person name="McWilliam S."/>
            <person name="Madan Babu M."/>
            <person name="Madera M."/>
            <person name="Marchionni L."/>
            <person name="Matsuda H."/>
            <person name="Matsuzawa S."/>
            <person name="Miki H."/>
            <person name="Mignone F."/>
            <person name="Miyake S."/>
            <person name="Morris K."/>
            <person name="Mottagui-Tabar S."/>
            <person name="Mulder N."/>
            <person name="Nakano N."/>
            <person name="Nakauchi H."/>
            <person name="Ng P."/>
            <person name="Nilsson R."/>
            <person name="Nishiguchi S."/>
            <person name="Nishikawa S."/>
            <person name="Nori F."/>
            <person name="Ohara O."/>
            <person name="Okazaki Y."/>
            <person name="Orlando V."/>
            <person name="Pang K.C."/>
            <person name="Pavan W.J."/>
            <person name="Pavesi G."/>
            <person name="Pesole G."/>
            <person name="Petrovsky N."/>
            <person name="Piazza S."/>
            <person name="Reed J."/>
            <person name="Reid J.F."/>
            <person name="Ring B.Z."/>
            <person name="Ringwald M."/>
            <person name="Rost B."/>
            <person name="Ruan Y."/>
            <person name="Salzberg S.L."/>
            <person name="Sandelin A."/>
            <person name="Schneider C."/>
            <person name="Schoenbach C."/>
            <person name="Sekiguchi K."/>
            <person name="Semple C.A."/>
            <person name="Seno S."/>
            <person name="Sessa L."/>
            <person name="Sheng Y."/>
            <person name="Shibata Y."/>
            <person name="Shimada H."/>
            <person name="Shimada K."/>
            <person name="Silva D."/>
            <person name="Sinclair B."/>
            <person name="Sperling S."/>
            <person name="Stupka E."/>
            <person name="Sugiura K."/>
            <person name="Sultana R."/>
            <person name="Takenaka Y."/>
            <person name="Taki K."/>
            <person name="Tammoja K."/>
            <person name="Tan S.L."/>
            <person name="Tang S."/>
            <person name="Taylor M.S."/>
            <person name="Tegner J."/>
            <person name="Teichmann S.A."/>
            <person name="Ueda H.R."/>
            <person name="van Nimwegen E."/>
            <person name="Verardo R."/>
            <person name="Wei C.L."/>
            <person name="Yagi K."/>
            <person name="Yamanishi H."/>
            <person name="Zabarovsky E."/>
            <person name="Zhu S."/>
            <person name="Zimmer A."/>
            <person name="Hide W."/>
            <person name="Bult C."/>
            <person name="Grimmond S.M."/>
            <person name="Teasdale R.D."/>
            <person name="Liu E.T."/>
            <person name="Brusic V."/>
            <person name="Quackenbush J."/>
            <person name="Wahlestedt C."/>
            <person name="Mattick J.S."/>
            <person name="Hume D.A."/>
            <person name="Kai C."/>
            <person name="Sasaki D."/>
            <person name="Tomaru Y."/>
            <person name="Fukuda S."/>
            <person name="Kanamori-Katayama M."/>
            <person name="Suzuki M."/>
            <person name="Aoki J."/>
            <person name="Arakawa T."/>
            <person name="Iida J."/>
            <person name="Imamura K."/>
            <person name="Itoh M."/>
            <person name="Kato T."/>
            <person name="Kawaji H."/>
            <person name="Kawagashira N."/>
            <person name="Kawashima T."/>
            <person name="Kojima M."/>
            <person name="Kondo S."/>
            <person name="Konno H."/>
            <person name="Nakano K."/>
            <person name="Ninomiya N."/>
            <person name="Nishio T."/>
            <person name="Okada M."/>
            <person name="Plessy C."/>
            <person name="Shibata K."/>
            <person name="Shiraki T."/>
            <person name="Suzuki S."/>
            <person name="Tagami M."/>
            <person name="Waki K."/>
            <person name="Watahiki A."/>
            <person name="Okamura-Oho Y."/>
            <person name="Suzuki H."/>
            <person name="Kawai J."/>
            <person name="Hayashizaki Y."/>
        </authorList>
    </citation>
    <scope>NUCLEOTIDE SEQUENCE [LARGE SCALE MRNA] (ISOFORM 2)</scope>
    <source>
        <strain>C57BL/6J</strain>
        <tissue>Testis</tissue>
    </source>
</reference>
<reference key="2">
    <citation type="journal article" date="2009" name="PLoS Biol.">
        <title>Lineage-specific biology revealed by a finished genome assembly of the mouse.</title>
        <authorList>
            <person name="Church D.M."/>
            <person name="Goodstadt L."/>
            <person name="Hillier L.W."/>
            <person name="Zody M.C."/>
            <person name="Goldstein S."/>
            <person name="She X."/>
            <person name="Bult C.J."/>
            <person name="Agarwala R."/>
            <person name="Cherry J.L."/>
            <person name="DiCuccio M."/>
            <person name="Hlavina W."/>
            <person name="Kapustin Y."/>
            <person name="Meric P."/>
            <person name="Maglott D."/>
            <person name="Birtle Z."/>
            <person name="Marques A.C."/>
            <person name="Graves T."/>
            <person name="Zhou S."/>
            <person name="Teague B."/>
            <person name="Potamousis K."/>
            <person name="Churas C."/>
            <person name="Place M."/>
            <person name="Herschleb J."/>
            <person name="Runnheim R."/>
            <person name="Forrest D."/>
            <person name="Amos-Landgraf J."/>
            <person name="Schwartz D.C."/>
            <person name="Cheng Z."/>
            <person name="Lindblad-Toh K."/>
            <person name="Eichler E.E."/>
            <person name="Ponting C.P."/>
        </authorList>
    </citation>
    <scope>NUCLEOTIDE SEQUENCE [LARGE SCALE GENOMIC DNA]</scope>
    <source>
        <strain>C57BL/6J</strain>
    </source>
</reference>
<reference key="3">
    <citation type="journal article" date="2010" name="Cell">
        <title>A tissue-specific atlas of mouse protein phosphorylation and expression.</title>
        <authorList>
            <person name="Huttlin E.L."/>
            <person name="Jedrychowski M.P."/>
            <person name="Elias J.E."/>
            <person name="Goswami T."/>
            <person name="Rad R."/>
            <person name="Beausoleil S.A."/>
            <person name="Villen J."/>
            <person name="Haas W."/>
            <person name="Sowa M.E."/>
            <person name="Gygi S.P."/>
        </authorList>
    </citation>
    <scope>IDENTIFICATION BY MASS SPECTROMETRY [LARGE SCALE ANALYSIS]</scope>
    <source>
        <tissue>Testis</tissue>
    </source>
</reference>
<reference key="4">
    <citation type="journal article" date="2015" name="Cell">
        <title>MAJIN links telomeric DNA to the nuclear membrane by exchanging telomere cap.</title>
        <authorList>
            <person name="Shibuya H."/>
            <person name="Hernandez-Hernandez A."/>
            <person name="Morimoto A."/>
            <person name="Negishi L."/>
            <person name="Hoeoeg C."/>
            <person name="Watanabe Y."/>
        </authorList>
    </citation>
    <scope>FUNCTION</scope>
    <scope>SUBCELLULAR LOCATION</scope>
    <scope>TISSUE SPECIFICITY</scope>
    <scope>IDENTIFICATION BY MASS SPECTROMETRY</scope>
    <scope>IDENTIFICATION IN THE MAJIN-TERB1-TERB2 COMPLEX</scope>
    <scope>DISRUPTION PHENOTYPE</scope>
    <scope>MUTAGENESIS OF 140-ARG--LYS-145</scope>
</reference>
<protein>
    <recommendedName>
        <fullName evidence="4">Membrane-anchored junction protein</fullName>
    </recommendedName>
</protein>
<feature type="chain" id="PRO_0000325833" description="Membrane-anchored junction protein">
    <location>
        <begin position="1"/>
        <end position="256"/>
    </location>
</feature>
<feature type="topological domain" description="Nuclear" evidence="5">
    <location>
        <begin position="1"/>
        <end position="232"/>
    </location>
</feature>
<feature type="transmembrane region" description="Helical" evidence="1">
    <location>
        <begin position="233"/>
        <end position="251"/>
    </location>
</feature>
<feature type="topological domain" description="Perinuclear space" evidence="5">
    <location>
        <begin position="252"/>
        <end position="256"/>
    </location>
</feature>
<feature type="region of interest" description="Disordered" evidence="2">
    <location>
        <begin position="143"/>
        <end position="197"/>
    </location>
</feature>
<feature type="region of interest" description="Disordered" evidence="2">
    <location>
        <begin position="211"/>
        <end position="235"/>
    </location>
</feature>
<feature type="compositionally biased region" description="Polar residues" evidence="2">
    <location>
        <begin position="164"/>
        <end position="173"/>
    </location>
</feature>
<feature type="compositionally biased region" description="Basic and acidic residues" evidence="2">
    <location>
        <begin position="175"/>
        <end position="184"/>
    </location>
</feature>
<feature type="splice variant" id="VSP_058064" description="In isoform 2.">
    <location>
        <begin position="50"/>
        <end position="181"/>
    </location>
</feature>
<feature type="mutagenesis site" description="Impaired DNA-binding activity." evidence="3">
    <original>RKWKRK</original>
    <variation>AAWAAA</variation>
    <location>
        <begin position="140"/>
        <end position="145"/>
    </location>
</feature>
<name>MAJIN_MOUSE</name>